<evidence type="ECO:0000250" key="1"/>
<evidence type="ECO:0000250" key="2">
    <source>
        <dbReference type="UniProtKB" id="Q7A2T0"/>
    </source>
</evidence>
<evidence type="ECO:0000255" key="3"/>
<name>FMTA_STAAR</name>
<organism>
    <name type="scientific">Staphylococcus aureus (strain MRSA252)</name>
    <dbReference type="NCBI Taxonomy" id="282458"/>
    <lineage>
        <taxon>Bacteria</taxon>
        <taxon>Bacillati</taxon>
        <taxon>Bacillota</taxon>
        <taxon>Bacilli</taxon>
        <taxon>Bacillales</taxon>
        <taxon>Staphylococcaceae</taxon>
        <taxon>Staphylococcus</taxon>
    </lineage>
</organism>
<reference key="1">
    <citation type="journal article" date="2004" name="Proc. Natl. Acad. Sci. U.S.A.">
        <title>Complete genomes of two clinical Staphylococcus aureus strains: evidence for the rapid evolution of virulence and drug resistance.</title>
        <authorList>
            <person name="Holden M.T.G."/>
            <person name="Feil E.J."/>
            <person name="Lindsay J.A."/>
            <person name="Peacock S.J."/>
            <person name="Day N.P.J."/>
            <person name="Enright M.C."/>
            <person name="Foster T.J."/>
            <person name="Moore C.E."/>
            <person name="Hurst L."/>
            <person name="Atkin R."/>
            <person name="Barron A."/>
            <person name="Bason N."/>
            <person name="Bentley S.D."/>
            <person name="Chillingworth C."/>
            <person name="Chillingworth T."/>
            <person name="Churcher C."/>
            <person name="Clark L."/>
            <person name="Corton C."/>
            <person name="Cronin A."/>
            <person name="Doggett J."/>
            <person name="Dowd L."/>
            <person name="Feltwell T."/>
            <person name="Hance Z."/>
            <person name="Harris B."/>
            <person name="Hauser H."/>
            <person name="Holroyd S."/>
            <person name="Jagels K."/>
            <person name="James K.D."/>
            <person name="Lennard N."/>
            <person name="Line A."/>
            <person name="Mayes R."/>
            <person name="Moule S."/>
            <person name="Mungall K."/>
            <person name="Ormond D."/>
            <person name="Quail M.A."/>
            <person name="Rabbinowitsch E."/>
            <person name="Rutherford K.M."/>
            <person name="Sanders M."/>
            <person name="Sharp S."/>
            <person name="Simmonds M."/>
            <person name="Stevens K."/>
            <person name="Whitehead S."/>
            <person name="Barrell B.G."/>
            <person name="Spratt B.G."/>
            <person name="Parkhill J."/>
        </authorList>
    </citation>
    <scope>NUCLEOTIDE SEQUENCE [LARGE SCALE GENOMIC DNA]</scope>
    <source>
        <strain>MRSA252</strain>
    </source>
</reference>
<accession>Q6GI27</accession>
<comment type="function">
    <text evidence="2">Catalyzes the liberation of D-alanyl moieties present on wall teichoic acid (WTA) and lipoteichoic acid (LTA). Affects the methicillin resistance level and autolysis in the presence of Triton X-100 as well as the cell wall structure.</text>
</comment>
<comment type="catalytic activity">
    <reaction evidence="2">
        <text>[(4-D-Ala)-(2-GlcNAc)-Rib-ol-P]n-[Gro-P]m-beta-D-ManNAc-(1-&gt;4)-alpha-D-GlcNAc-P-peptidoglycan + n H2O = [(2-GlcNAc)-Rib-ol-P]n-[Gro-P]m-beta-D-ManNAc-(1-&gt;4)-alpha-D-GlcNAc-P-peptidoglycan + n D-alanine.</text>
        <dbReference type="EC" id="3.1.1.103"/>
    </reaction>
</comment>
<comment type="subcellular location">
    <subcellularLocation>
        <location evidence="1">Cell membrane</location>
        <topology evidence="1">Peripheral membrane protein</topology>
    </subcellularLocation>
</comment>
<sequence>MKFNKEKLVIHACVLLFIIISIGLVFHRLQTKTNSIEPIHKETKLSDNAKYLVDRNKGKGEPSKLKEVYNSKDPKYKKIDRYLQNSLFNGSVAVYENGKLKMSKGYGYQDFEKGIKNTPNTMFLIGSAQKFSTGLLLKQLEEEHKININDPVSKYIPWFKTSKPIPLKDLMLHQSGLYKYKSSKDYKNLDQAVRAIQKRGIDPKKYKKHMYNDGNYLVLAKVIEEVTGKSYAENYYTKIGDPLKLQHSAFYDEKSFRKYFAKGYSYNSTGLSFLKPNVLEQYYGAGNIYMTPTDMGKLITQIQQYKLFSPKITNPLLHEFGTKQYPDEYRYGFYVKPTLNRLNGGLFGQVFTVYYNDKYVVVLALNVKGNNEVRIKHIYNDILKQNKPYNTKGVIVQ</sequence>
<proteinExistence type="inferred from homology"/>
<keyword id="KW-0046">Antibiotic resistance</keyword>
<keyword id="KW-1003">Cell membrane</keyword>
<keyword id="KW-0961">Cell wall biogenesis/degradation</keyword>
<keyword id="KW-0378">Hydrolase</keyword>
<keyword id="KW-0472">Membrane</keyword>
<keyword id="KW-0732">Signal</keyword>
<dbReference type="EC" id="3.1.1.103" evidence="2"/>
<dbReference type="EMBL" id="BX571856">
    <property type="protein sequence ID" value="CAG40034.1"/>
    <property type="molecule type" value="Genomic_DNA"/>
</dbReference>
<dbReference type="RefSeq" id="WP_000671206.1">
    <property type="nucleotide sequence ID" value="NC_002952.2"/>
</dbReference>
<dbReference type="SMR" id="Q6GI27"/>
<dbReference type="MEROPS" id="S12.006"/>
<dbReference type="KEGG" id="sar:SAR1030"/>
<dbReference type="HOGENOM" id="CLU_020027_0_0_9"/>
<dbReference type="Proteomes" id="UP000000596">
    <property type="component" value="Chromosome"/>
</dbReference>
<dbReference type="GO" id="GO:0005886">
    <property type="term" value="C:plasma membrane"/>
    <property type="evidence" value="ECO:0007669"/>
    <property type="project" value="UniProtKB-SubCell"/>
</dbReference>
<dbReference type="GO" id="GO:0016787">
    <property type="term" value="F:hydrolase activity"/>
    <property type="evidence" value="ECO:0007669"/>
    <property type="project" value="UniProtKB-KW"/>
</dbReference>
<dbReference type="GO" id="GO:0071555">
    <property type="term" value="P:cell wall organization"/>
    <property type="evidence" value="ECO:0007669"/>
    <property type="project" value="UniProtKB-KW"/>
</dbReference>
<dbReference type="GO" id="GO:0046677">
    <property type="term" value="P:response to antibiotic"/>
    <property type="evidence" value="ECO:0007669"/>
    <property type="project" value="UniProtKB-KW"/>
</dbReference>
<dbReference type="Gene3D" id="3.40.710.10">
    <property type="entry name" value="DD-peptidase/beta-lactamase superfamily"/>
    <property type="match status" value="1"/>
</dbReference>
<dbReference type="InterPro" id="IPR050491">
    <property type="entry name" value="Bact_CellWall_Synth/Modif"/>
</dbReference>
<dbReference type="InterPro" id="IPR001466">
    <property type="entry name" value="Beta-lactam-related"/>
</dbReference>
<dbReference type="InterPro" id="IPR012338">
    <property type="entry name" value="Beta-lactam/transpept-like"/>
</dbReference>
<dbReference type="PANTHER" id="PTHR46825">
    <property type="entry name" value="D-ALANYL-D-ALANINE-CARBOXYPEPTIDASE/ENDOPEPTIDASE AMPH"/>
    <property type="match status" value="1"/>
</dbReference>
<dbReference type="PANTHER" id="PTHR46825:SF11">
    <property type="entry name" value="PENICILLIN-BINDING PROTEIN 4"/>
    <property type="match status" value="1"/>
</dbReference>
<dbReference type="Pfam" id="PF00144">
    <property type="entry name" value="Beta-lactamase"/>
    <property type="match status" value="1"/>
</dbReference>
<dbReference type="SUPFAM" id="SSF56601">
    <property type="entry name" value="beta-lactamase/transpeptidase-like"/>
    <property type="match status" value="1"/>
</dbReference>
<gene>
    <name type="primary">fmtA</name>
    <name type="synonym">fmt</name>
    <name type="ordered locus">SAR1030</name>
</gene>
<protein>
    <recommendedName>
        <fullName>Teichoic acid D-alanine hydrolase</fullName>
        <ecNumber evidence="2">3.1.1.103</ecNumber>
    </recommendedName>
    <alternativeName>
        <fullName>Teichoic acid D-alanine esterase</fullName>
    </alternativeName>
</protein>
<feature type="signal peptide" evidence="3">
    <location>
        <begin position="1"/>
        <end position="27"/>
    </location>
</feature>
<feature type="chain" id="PRO_0000043102" description="Teichoic acid D-alanine hydrolase">
    <location>
        <begin position="28"/>
        <end position="397"/>
    </location>
</feature>